<accession>Q7RVI1</accession>
<accession>Q6MWL5</accession>
<dbReference type="EMBL" id="BX842597">
    <property type="protein sequence ID" value="CAE75742.1"/>
    <property type="molecule type" value="Genomic_DNA"/>
</dbReference>
<dbReference type="EMBL" id="CM002237">
    <property type="protein sequence ID" value="EAA33994.2"/>
    <property type="molecule type" value="Genomic_DNA"/>
</dbReference>
<dbReference type="RefSeq" id="XP_963230.2">
    <property type="nucleotide sequence ID" value="XM_958137.3"/>
</dbReference>
<dbReference type="PDB" id="7R81">
    <property type="method" value="EM"/>
    <property type="resolution" value="2.70 A"/>
    <property type="chains" value="G2=1-213"/>
</dbReference>
<dbReference type="PDBsum" id="7R81"/>
<dbReference type="EMDB" id="EMD-24307"/>
<dbReference type="SMR" id="Q7RVI1"/>
<dbReference type="FunCoup" id="Q7RVI1">
    <property type="interactions" value="984"/>
</dbReference>
<dbReference type="STRING" id="367110.Q7RVI1"/>
<dbReference type="PaxDb" id="5141-EFNCRP00000009280"/>
<dbReference type="EnsemblFungi" id="EAA33994">
    <property type="protein sequence ID" value="EAA33994"/>
    <property type="gene ID" value="NCU09475"/>
</dbReference>
<dbReference type="GeneID" id="3879378"/>
<dbReference type="KEGG" id="ncr:NCU09475"/>
<dbReference type="VEuPathDB" id="FungiDB:NCU09475"/>
<dbReference type="HOGENOM" id="CLU_063975_0_0_1"/>
<dbReference type="InParanoid" id="Q7RVI1"/>
<dbReference type="OMA" id="KMNIVER"/>
<dbReference type="OrthoDB" id="10264639at2759"/>
<dbReference type="Proteomes" id="UP000001805">
    <property type="component" value="Chromosome 6, Linkage Group II"/>
</dbReference>
<dbReference type="GO" id="GO:0022627">
    <property type="term" value="C:cytosolic small ribosomal subunit"/>
    <property type="evidence" value="ECO:0000318"/>
    <property type="project" value="GO_Central"/>
</dbReference>
<dbReference type="GO" id="GO:0005840">
    <property type="term" value="C:ribosome"/>
    <property type="evidence" value="ECO:0000318"/>
    <property type="project" value="GO_Central"/>
</dbReference>
<dbReference type="GO" id="GO:0003729">
    <property type="term" value="F:mRNA binding"/>
    <property type="evidence" value="ECO:0000318"/>
    <property type="project" value="GO_Central"/>
</dbReference>
<dbReference type="GO" id="GO:0019843">
    <property type="term" value="F:rRNA binding"/>
    <property type="evidence" value="ECO:0000318"/>
    <property type="project" value="GO_Central"/>
</dbReference>
<dbReference type="GO" id="GO:0003735">
    <property type="term" value="F:structural constituent of ribosome"/>
    <property type="evidence" value="ECO:0000318"/>
    <property type="project" value="GO_Central"/>
</dbReference>
<dbReference type="GO" id="GO:0030490">
    <property type="term" value="P:maturation of SSU-rRNA"/>
    <property type="evidence" value="ECO:0007669"/>
    <property type="project" value="EnsemblFungi"/>
</dbReference>
<dbReference type="GO" id="GO:0000028">
    <property type="term" value="P:ribosomal small subunit assembly"/>
    <property type="evidence" value="ECO:0000318"/>
    <property type="project" value="GO_Central"/>
</dbReference>
<dbReference type="GO" id="GO:0000054">
    <property type="term" value="P:ribosomal subunit export from nucleus"/>
    <property type="evidence" value="ECO:0007669"/>
    <property type="project" value="EnsemblFungi"/>
</dbReference>
<dbReference type="GO" id="GO:0006412">
    <property type="term" value="P:translation"/>
    <property type="evidence" value="ECO:0000318"/>
    <property type="project" value="GO_Central"/>
</dbReference>
<dbReference type="CDD" id="cd14867">
    <property type="entry name" value="uS7_Eukaryote"/>
    <property type="match status" value="1"/>
</dbReference>
<dbReference type="FunFam" id="1.10.455.10:FF:000002">
    <property type="entry name" value="40S ribosomal protein S5"/>
    <property type="match status" value="1"/>
</dbReference>
<dbReference type="Gene3D" id="1.10.455.10">
    <property type="entry name" value="Ribosomal protein S7 domain"/>
    <property type="match status" value="1"/>
</dbReference>
<dbReference type="InterPro" id="IPR000235">
    <property type="entry name" value="Ribosomal_uS7"/>
</dbReference>
<dbReference type="InterPro" id="IPR020606">
    <property type="entry name" value="Ribosomal_uS7_CS"/>
</dbReference>
<dbReference type="InterPro" id="IPR023798">
    <property type="entry name" value="Ribosomal_uS7_dom"/>
</dbReference>
<dbReference type="InterPro" id="IPR036823">
    <property type="entry name" value="Ribosomal_uS7_dom_sf"/>
</dbReference>
<dbReference type="InterPro" id="IPR005716">
    <property type="entry name" value="Ribosomal_uS7_euk/arc"/>
</dbReference>
<dbReference type="NCBIfam" id="NF003106">
    <property type="entry name" value="PRK04027.1"/>
    <property type="match status" value="1"/>
</dbReference>
<dbReference type="NCBIfam" id="TIGR01028">
    <property type="entry name" value="uS7_euk_arch"/>
    <property type="match status" value="1"/>
</dbReference>
<dbReference type="PANTHER" id="PTHR11205">
    <property type="entry name" value="RIBOSOMAL PROTEIN S7"/>
    <property type="match status" value="1"/>
</dbReference>
<dbReference type="Pfam" id="PF00177">
    <property type="entry name" value="Ribosomal_S7"/>
    <property type="match status" value="1"/>
</dbReference>
<dbReference type="PIRSF" id="PIRSF002122">
    <property type="entry name" value="RPS7p_RPS7a_RPS5e_RPS7o"/>
    <property type="match status" value="1"/>
</dbReference>
<dbReference type="SUPFAM" id="SSF47973">
    <property type="entry name" value="Ribosomal protein S7"/>
    <property type="match status" value="1"/>
</dbReference>
<dbReference type="PROSITE" id="PS00052">
    <property type="entry name" value="RIBOSOMAL_S7"/>
    <property type="match status" value="1"/>
</dbReference>
<comment type="function">
    <text evidence="4">Component of the ribosome, a large ribonucleoprotein complex responsible for the synthesis of proteins in the cell. The small ribosomal subunit (SSU) binds messenger RNAs (mRNAs) and translates the encoded message by selecting cognate aminoacyl-transfer RNA (tRNA) molecules. The large subunit (LSU) contains the ribosomal catalytic site termed the peptidyl transferase center (PTC), which catalyzes the formation of peptide bonds, thereby polymerizing the amino acids delivered by tRNAs into a polypeptide chain. The nascent polypeptides leave the ribosome through a tunnel in the LSU and interact with protein factors that function in enzymatic processing, targeting, and the membrane insertion of nascent chains at the exit of the ribosomal tunnel.</text>
</comment>
<comment type="subunit">
    <text evidence="1">Component of the small ribosomal subunit (SSU). Mature N.crassa ribosomes consist of a small (40S) and a large (60S) subunit. The 40S small subunit contains 1 molecule of ribosomal RNA (18S rRNA) and at least 32 different proteins. The large 60S subunit contains 3 rRNA molecules (26S, 5.8S and 5S rRNA) and at least 42 different proteins.</text>
</comment>
<comment type="subcellular location">
    <subcellularLocation>
        <location evidence="1">Cytoplasm</location>
    </subcellularLocation>
</comment>
<comment type="similarity">
    <text evidence="3">Belongs to the universal ribosomal protein uS7 family.</text>
</comment>
<keyword id="KW-0002">3D-structure</keyword>
<keyword id="KW-0963">Cytoplasm</keyword>
<keyword id="KW-1185">Reference proteome</keyword>
<keyword id="KW-0687">Ribonucleoprotein</keyword>
<keyword id="KW-0689">Ribosomal protein</keyword>
<feature type="chain" id="PRO_0000260173" description="Small ribosomal subunit protein uS7">
    <location>
        <begin position="1"/>
        <end position="213"/>
    </location>
</feature>
<protein>
    <recommendedName>
        <fullName evidence="2">Small ribosomal subunit protein uS7</fullName>
    </recommendedName>
    <alternativeName>
        <fullName>40S ribosomal protein S5</fullName>
    </alternativeName>
</protein>
<proteinExistence type="evidence at protein level"/>
<reference key="1">
    <citation type="journal article" date="2003" name="Nucleic Acids Res.">
        <title>What's in the genome of a filamentous fungus? Analysis of the Neurospora genome sequence.</title>
        <authorList>
            <person name="Mannhaupt G."/>
            <person name="Montrone C."/>
            <person name="Haase D."/>
            <person name="Mewes H.-W."/>
            <person name="Aign V."/>
            <person name="Hoheisel J.D."/>
            <person name="Fartmann B."/>
            <person name="Nyakatura G."/>
            <person name="Kempken F."/>
            <person name="Maier J."/>
            <person name="Schulte U."/>
        </authorList>
    </citation>
    <scope>NUCLEOTIDE SEQUENCE [LARGE SCALE GENOMIC DNA]</scope>
    <source>
        <strain>ATCC 24698 / 74-OR23-1A / CBS 708.71 / DSM 1257 / FGSC 987</strain>
    </source>
</reference>
<reference key="2">
    <citation type="journal article" date="2003" name="Nature">
        <title>The genome sequence of the filamentous fungus Neurospora crassa.</title>
        <authorList>
            <person name="Galagan J.E."/>
            <person name="Calvo S.E."/>
            <person name="Borkovich K.A."/>
            <person name="Selker E.U."/>
            <person name="Read N.D."/>
            <person name="Jaffe D.B."/>
            <person name="FitzHugh W."/>
            <person name="Ma L.-J."/>
            <person name="Smirnov S."/>
            <person name="Purcell S."/>
            <person name="Rehman B."/>
            <person name="Elkins T."/>
            <person name="Engels R."/>
            <person name="Wang S."/>
            <person name="Nielsen C.B."/>
            <person name="Butler J."/>
            <person name="Endrizzi M."/>
            <person name="Qui D."/>
            <person name="Ianakiev P."/>
            <person name="Bell-Pedersen D."/>
            <person name="Nelson M.A."/>
            <person name="Werner-Washburne M."/>
            <person name="Selitrennikoff C.P."/>
            <person name="Kinsey J.A."/>
            <person name="Braun E.L."/>
            <person name="Zelter A."/>
            <person name="Schulte U."/>
            <person name="Kothe G.O."/>
            <person name="Jedd G."/>
            <person name="Mewes H.-W."/>
            <person name="Staben C."/>
            <person name="Marcotte E."/>
            <person name="Greenberg D."/>
            <person name="Roy A."/>
            <person name="Foley K."/>
            <person name="Naylor J."/>
            <person name="Stange-Thomann N."/>
            <person name="Barrett R."/>
            <person name="Gnerre S."/>
            <person name="Kamal M."/>
            <person name="Kamvysselis M."/>
            <person name="Mauceli E.W."/>
            <person name="Bielke C."/>
            <person name="Rudd S."/>
            <person name="Frishman D."/>
            <person name="Krystofova S."/>
            <person name="Rasmussen C."/>
            <person name="Metzenberg R.L."/>
            <person name="Perkins D.D."/>
            <person name="Kroken S."/>
            <person name="Cogoni C."/>
            <person name="Macino G."/>
            <person name="Catcheside D.E.A."/>
            <person name="Li W."/>
            <person name="Pratt R.J."/>
            <person name="Osmani S.A."/>
            <person name="DeSouza C.P.C."/>
            <person name="Glass N.L."/>
            <person name="Orbach M.J."/>
            <person name="Berglund J.A."/>
            <person name="Voelker R."/>
            <person name="Yarden O."/>
            <person name="Plamann M."/>
            <person name="Seiler S."/>
            <person name="Dunlap J.C."/>
            <person name="Radford A."/>
            <person name="Aramayo R."/>
            <person name="Natvig D.O."/>
            <person name="Alex L.A."/>
            <person name="Mannhaupt G."/>
            <person name="Ebbole D.J."/>
            <person name="Freitag M."/>
            <person name="Paulsen I."/>
            <person name="Sachs M.S."/>
            <person name="Lander E.S."/>
            <person name="Nusbaum C."/>
            <person name="Birren B.W."/>
        </authorList>
    </citation>
    <scope>NUCLEOTIDE SEQUENCE [LARGE SCALE GENOMIC DNA]</scope>
    <source>
        <strain>ATCC 24698 / 74-OR23-1A / CBS 708.71 / DSM 1257 / FGSC 987</strain>
    </source>
</reference>
<reference evidence="5" key="3">
    <citation type="journal article" date="2021" name="Proc. Natl. Acad. Sci. U.S.A.">
        <title>Structure of the translating Neurospora ribosome arrested by cycloheximide.</title>
        <authorList>
            <person name="Shen L."/>
            <person name="Su Z."/>
            <person name="Yang K."/>
            <person name="Wu C."/>
            <person name="Becker T."/>
            <person name="Bell-Pedersen D."/>
            <person name="Zhang J."/>
            <person name="Sachs M.S."/>
        </authorList>
    </citation>
    <scope>STRUCTURE BY ELECTRON MICROSCOPY (2.70 ANGSTROMS)</scope>
</reference>
<gene>
    <name type="primary">rps-5</name>
    <name type="ORF">NCU09475</name>
</gene>
<evidence type="ECO:0000269" key="1">
    <source>
    </source>
</evidence>
<evidence type="ECO:0000303" key="2">
    <source>
    </source>
</evidence>
<evidence type="ECO:0000305" key="3"/>
<evidence type="ECO:0000305" key="4">
    <source>
    </source>
</evidence>
<evidence type="ECO:0007744" key="5">
    <source>
        <dbReference type="PDB" id="7R81"/>
    </source>
</evidence>
<sequence length="213" mass="23680">MSEGEVDVAAVSQYEVLPKEVLAEVGSVKLFNRWSYEDVEIRDISLTDYIQIRSPVYLPHSAGRYAAKRFRKANCPIIERLTNSLMMHGRNNGKKLMAVRIVAHAFEIIHLMTDQNPIQIAVDAIVNCGPREDSTRIGSAGTVRRQAVDVSPLRRVNQAIALLTTGAREASFRNVKSIAECLAEELINAAKGSSNSYAIKKKDELERVAKSNR</sequence>
<organism>
    <name type="scientific">Neurospora crassa (strain ATCC 24698 / 74-OR23-1A / CBS 708.71 / DSM 1257 / FGSC 987)</name>
    <dbReference type="NCBI Taxonomy" id="367110"/>
    <lineage>
        <taxon>Eukaryota</taxon>
        <taxon>Fungi</taxon>
        <taxon>Dikarya</taxon>
        <taxon>Ascomycota</taxon>
        <taxon>Pezizomycotina</taxon>
        <taxon>Sordariomycetes</taxon>
        <taxon>Sordariomycetidae</taxon>
        <taxon>Sordariales</taxon>
        <taxon>Sordariaceae</taxon>
        <taxon>Neurospora</taxon>
    </lineage>
</organism>
<name>RS5_NEUCR</name>